<gene>
    <name type="primary">ARE2</name>
</gene>
<proteinExistence type="inferred from homology"/>
<evidence type="ECO:0000250" key="1">
    <source>
        <dbReference type="UniProtKB" id="P25628"/>
    </source>
</evidence>
<evidence type="ECO:0000250" key="2">
    <source>
        <dbReference type="UniProtKB" id="P35610"/>
    </source>
</evidence>
<evidence type="ECO:0000255" key="3"/>
<evidence type="ECO:0000256" key="4">
    <source>
        <dbReference type="SAM" id="MobiDB-lite"/>
    </source>
</evidence>
<evidence type="ECO:0000305" key="5"/>
<comment type="function">
    <text evidence="1">Sterol O-acyltransferase that catalyzes the formation of stery esters.</text>
</comment>
<comment type="subcellular location">
    <subcellularLocation>
        <location evidence="1">Endoplasmic reticulum membrane</location>
        <topology evidence="3">Multi-pass membrane protein</topology>
    </subcellularLocation>
</comment>
<comment type="similarity">
    <text evidence="5">Belongs to the membrane-bound acyltransferase family. Sterol o-acyltransferase subfamily.</text>
</comment>
<reference key="1">
    <citation type="journal article" date="2003" name="Nature">
        <title>Yeast genome duplication was followed by asynchronous differentiation of duplicated genes.</title>
        <authorList>
            <person name="Langkjaer R.B."/>
            <person name="Cliften P.F."/>
            <person name="Johnston M."/>
            <person name="Piskur J."/>
        </authorList>
    </citation>
    <scope>NUCLEOTIDE SEQUENCE [GENOMIC DNA]</scope>
    <source>
        <strain>623-6C / CBS 9787 / CLIB 533</strain>
    </source>
</reference>
<keyword id="KW-0012">Acyltransferase</keyword>
<keyword id="KW-0256">Endoplasmic reticulum</keyword>
<keyword id="KW-0472">Membrane</keyword>
<keyword id="KW-0808">Transferase</keyword>
<keyword id="KW-0812">Transmembrane</keyword>
<keyword id="KW-1133">Transmembrane helix</keyword>
<accession>Q876L2</accession>
<dbReference type="EC" id="2.3.1.-"/>
<dbReference type="EMBL" id="AY144799">
    <property type="protein sequence ID" value="AAO32363.1"/>
    <property type="molecule type" value="Genomic_DNA"/>
</dbReference>
<dbReference type="SMR" id="Q876L2"/>
<dbReference type="GO" id="GO:0005789">
    <property type="term" value="C:endoplasmic reticulum membrane"/>
    <property type="evidence" value="ECO:0007669"/>
    <property type="project" value="UniProtKB-SubCell"/>
</dbReference>
<dbReference type="GO" id="GO:0034737">
    <property type="term" value="F:ergosterol O-acyltransferase activity"/>
    <property type="evidence" value="ECO:0007669"/>
    <property type="project" value="TreeGrafter"/>
</dbReference>
<dbReference type="GO" id="GO:0008204">
    <property type="term" value="P:ergosterol metabolic process"/>
    <property type="evidence" value="ECO:0007669"/>
    <property type="project" value="TreeGrafter"/>
</dbReference>
<dbReference type="InterPro" id="IPR004299">
    <property type="entry name" value="MBOAT_fam"/>
</dbReference>
<dbReference type="InterPro" id="IPR014371">
    <property type="entry name" value="Oat_ACAT_DAG_ARE"/>
</dbReference>
<dbReference type="PANTHER" id="PTHR10408">
    <property type="entry name" value="STEROL O-ACYLTRANSFERASE"/>
    <property type="match status" value="1"/>
</dbReference>
<dbReference type="PANTHER" id="PTHR10408:SF23">
    <property type="entry name" value="STEROL O-ACYLTRANSFERASE 1-RELATED"/>
    <property type="match status" value="1"/>
</dbReference>
<dbReference type="Pfam" id="PF03062">
    <property type="entry name" value="MBOAT"/>
    <property type="match status" value="1"/>
</dbReference>
<dbReference type="PIRSF" id="PIRSF000439">
    <property type="entry name" value="Oat_ACAT_DAG_ARE"/>
    <property type="match status" value="1"/>
</dbReference>
<protein>
    <recommendedName>
        <fullName>Sterol O-acyltransferase 2</fullName>
        <ecNumber>2.3.1.-</ecNumber>
    </recommendedName>
    <alternativeName>
        <fullName>Sterol-ester synthase 2</fullName>
    </alternativeName>
</protein>
<organism>
    <name type="scientific">Saccharomyces uvarum (strain ATCC 76518 / CBS 7001 / CLIB 283 / NBRC 10550 / MCYC 623 / NCYC 2669 / NRRL Y-11845)</name>
    <name type="common">Yeast</name>
    <name type="synonym">Saccharomyces bayanus var. uvarum</name>
    <dbReference type="NCBI Taxonomy" id="659244"/>
    <lineage>
        <taxon>Eukaryota</taxon>
        <taxon>Fungi</taxon>
        <taxon>Dikarya</taxon>
        <taxon>Ascomycota</taxon>
        <taxon>Saccharomycotina</taxon>
        <taxon>Saccharomycetes</taxon>
        <taxon>Saccharomycetales</taxon>
        <taxon>Saccharomycetaceae</taxon>
        <taxon>Saccharomyces</taxon>
    </lineage>
</organism>
<feature type="chain" id="PRO_0000207650" description="Sterol O-acyltransferase 2">
    <location>
        <begin position="1"/>
        <end position="650"/>
    </location>
</feature>
<feature type="transmembrane region" description="Helical" evidence="3">
    <location>
        <begin position="223"/>
        <end position="243"/>
    </location>
</feature>
<feature type="transmembrane region" description="Helical" evidence="3">
    <location>
        <begin position="300"/>
        <end position="320"/>
    </location>
</feature>
<feature type="transmembrane region" description="Helical" evidence="3">
    <location>
        <begin position="412"/>
        <end position="432"/>
    </location>
</feature>
<feature type="transmembrane region" description="Helical" evidence="3">
    <location>
        <begin position="450"/>
        <end position="470"/>
    </location>
</feature>
<feature type="transmembrane region" description="Helical" evidence="3">
    <location>
        <begin position="493"/>
        <end position="513"/>
    </location>
</feature>
<feature type="transmembrane region" description="Helical" evidence="3">
    <location>
        <begin position="575"/>
        <end position="595"/>
    </location>
</feature>
<feature type="transmembrane region" description="Helical" evidence="3">
    <location>
        <begin position="630"/>
        <end position="650"/>
    </location>
</feature>
<feature type="region of interest" description="Disordered" evidence="4">
    <location>
        <begin position="41"/>
        <end position="79"/>
    </location>
</feature>
<feature type="short sequence motif" description="FYXDWWN motif" evidence="2">
    <location>
        <begin position="531"/>
        <end position="537"/>
    </location>
</feature>
<feature type="compositionally biased region" description="Polar residues" evidence="4">
    <location>
        <begin position="64"/>
        <end position="75"/>
    </location>
</feature>
<feature type="active site" evidence="2">
    <location>
        <position position="587"/>
    </location>
</feature>
<name>ARE2_SACU7</name>
<sequence length="650" mass="74610">MDKNKDLLENEQFLRIQKLNASDAGKRQSILVDNEDELYGLTSSNNSCASEHEGEGEGEDERPATTSSAPTQNHSAGDVAFIPGKTAEEDTETVTKVVESDDQVFRTHVQTLSSKGKSRYRKGSSNFISFFDDMAFENRPSILDGSVNDPFKTKFVGPTLEKEIRKREKELMAMRKNLHHGKPAPDADAADAPALTTTTTTTTSATSPETVVTIETTILSSNFSGLYVAFWMAIAFGAVKALIDYYYQHNGSFKDSEILKFMTTNLSTVALIDLIMYLSTFFVVGIQYLCKWGVLNWSSTGWAFTSIYELLFVGFYMYLTENILKLHWLSKIFLFLHSLVLLMKMHSFAFYNGYLWGIKQELQFSKSALAKYKDSVNDPDVVDALEKSCEFCSFELNSQSLNDQTQKFPNNINVSNFFMFTMFPTLIYQIEYPRTKEIRWVYVLEKICAIFGTIFLMMIDAQILMHPVAMRALDVRNSEWTGILDRLLKWAGLLVDIVPGFIVMYILDFYLIWDAILNCVAELTRFGDRYFYGDWWNCVSWADFSRIWNIPVHKFLLRHVYHSSMSSFKLNKSQATLMTFFLSSVVHELAMYVIFKRLRFYLFFFQMLQVPLVALTNTKYMKDRTVIGNVIFWLGICMGPSVMCTLYLTF</sequence>